<organism>
    <name type="scientific">Arabidopsis thaliana</name>
    <name type="common">Mouse-ear cress</name>
    <dbReference type="NCBI Taxonomy" id="3702"/>
    <lineage>
        <taxon>Eukaryota</taxon>
        <taxon>Viridiplantae</taxon>
        <taxon>Streptophyta</taxon>
        <taxon>Embryophyta</taxon>
        <taxon>Tracheophyta</taxon>
        <taxon>Spermatophyta</taxon>
        <taxon>Magnoliopsida</taxon>
        <taxon>eudicotyledons</taxon>
        <taxon>Gunneridae</taxon>
        <taxon>Pentapetalae</taxon>
        <taxon>rosids</taxon>
        <taxon>malvids</taxon>
        <taxon>Brassicales</taxon>
        <taxon>Brassicaceae</taxon>
        <taxon>Camelineae</taxon>
        <taxon>Arabidopsis</taxon>
    </lineage>
</organism>
<accession>Q8GYH5</accession>
<accession>Q9FIU3</accession>
<gene>
    <name evidence="3" type="primary">BAD1</name>
    <name evidence="5" type="ordered locus">At5g54610</name>
    <name evidence="6" type="ORF">MRB17.11</name>
</gene>
<feature type="chain" id="PRO_0000438695" description="Ankyrin repeat-containing protein BDA1">
    <location>
        <begin position="1"/>
        <end position="426"/>
    </location>
</feature>
<feature type="transmembrane region" description="Helical" evidence="1">
    <location>
        <begin position="288"/>
        <end position="308"/>
    </location>
</feature>
<feature type="transmembrane region" description="Helical" evidence="1">
    <location>
        <begin position="329"/>
        <end position="349"/>
    </location>
</feature>
<feature type="transmembrane region" description="Helical" evidence="1">
    <location>
        <begin position="355"/>
        <end position="375"/>
    </location>
</feature>
<feature type="transmembrane region" description="Helical" evidence="1">
    <location>
        <begin position="380"/>
        <end position="400"/>
    </location>
</feature>
<feature type="repeat" description="ANK 1" evidence="1">
    <location>
        <begin position="1"/>
        <end position="29"/>
    </location>
</feature>
<feature type="repeat" description="ANK 2" evidence="1">
    <location>
        <begin position="36"/>
        <end position="65"/>
    </location>
</feature>
<feature type="repeat" description="ANK 3" evidence="1">
    <location>
        <begin position="70"/>
        <end position="99"/>
    </location>
</feature>
<feature type="repeat" description="ANK 4" evidence="1">
    <location>
        <begin position="104"/>
        <end position="134"/>
    </location>
</feature>
<feature type="repeat" description="ANK 5" evidence="1">
    <location>
        <begin position="138"/>
        <end position="167"/>
    </location>
</feature>
<feature type="repeat" description="ANK 6" evidence="1">
    <location>
        <begin position="182"/>
        <end position="212"/>
    </location>
</feature>
<feature type="mutagenesis site" description="In bad1-1; suppression of constitutive activation of defense responses in snc2-1D mutant." evidence="2">
    <original>P</original>
    <variation>L</variation>
    <location>
        <position position="74"/>
    </location>
</feature>
<feature type="mutagenesis site" description="In bad1-17D; gain-of-function mutant. Dwarf and lesion mimic phenotype. Constitutive activation of defense responses." evidence="2">
    <original>G</original>
    <variation>E</variation>
    <location>
        <position position="330"/>
    </location>
</feature>
<proteinExistence type="evidence at protein level"/>
<evidence type="ECO:0000255" key="1"/>
<evidence type="ECO:0000269" key="2">
    <source>
    </source>
</evidence>
<evidence type="ECO:0000303" key="3">
    <source>
    </source>
</evidence>
<evidence type="ECO:0000305" key="4"/>
<evidence type="ECO:0000312" key="5">
    <source>
        <dbReference type="Araport" id="AT5G54610"/>
    </source>
</evidence>
<evidence type="ECO:0000312" key="6">
    <source>
        <dbReference type="EMBL" id="BAB09340.1"/>
    </source>
</evidence>
<name>BAD1_ARATH</name>
<keyword id="KW-0040">ANK repeat</keyword>
<keyword id="KW-1003">Cell membrane</keyword>
<keyword id="KW-0472">Membrane</keyword>
<keyword id="KW-0611">Plant defense</keyword>
<keyword id="KW-1185">Reference proteome</keyword>
<keyword id="KW-0677">Repeat</keyword>
<keyword id="KW-0812">Transmembrane</keyword>
<keyword id="KW-1133">Transmembrane helix</keyword>
<sequence>MDSKLLLVTQSGSVDDLYSLIQAAPDILQKVDVLPIIHTPLHEASSAGKLDLAMELMILKPSFAKKLNEYGLSPLHLAVENDQVELALELVKVDPSLVRIRGRGGMTPLHLVAKKGDVDLLTDFLLACPESIKDVNVNGETILHITIMNDKYEQLKVLTGWMQKMRDSDDVFIDVLNRRDRGGNTVLHLAAYENNDKVVKQLVKCLSLDRNIQNKSGMTALDVLRARGSHMNKEIEEIIQMSGGKTGGSLSGIQEWYIFLREPVTFKEHCKTRIARYRSRISDGSRNALLVIAALIISATFQTAAQLLDKEKLDKVKKNGMRFSEFQLWGCNTVAFSIAILFSFILLPVGRAYEWWYFIITVPLVFSYFLLMYMMHGLSFFFLIIYEGGLFLVYLLVLYVKWKRCTQMKVRKPKSDLISDNFKNMV</sequence>
<protein>
    <recommendedName>
        <fullName evidence="4">Ankyrin repeat-containing protein BDA1</fullName>
    </recommendedName>
    <alternativeName>
        <fullName evidence="3">Protein BIAN DA 1</fullName>
    </alternativeName>
</protein>
<dbReference type="EMBL" id="AB016879">
    <property type="protein sequence ID" value="BAB09340.1"/>
    <property type="status" value="ALT_SEQ"/>
    <property type="molecule type" value="Genomic_DNA"/>
</dbReference>
<dbReference type="EMBL" id="CP002688">
    <property type="protein sequence ID" value="AED96518.1"/>
    <property type="molecule type" value="Genomic_DNA"/>
</dbReference>
<dbReference type="EMBL" id="AK117622">
    <property type="protein sequence ID" value="BAC42278.1"/>
    <property type="molecule type" value="mRNA"/>
</dbReference>
<dbReference type="SMR" id="Q8GYH5"/>
<dbReference type="IntAct" id="Q8GYH5">
    <property type="interactions" value="1"/>
</dbReference>
<dbReference type="STRING" id="3702.Q8GYH5"/>
<dbReference type="PaxDb" id="3702-AT5G54610.1"/>
<dbReference type="ProteomicsDB" id="240843"/>
<dbReference type="EnsemblPlants" id="AT5G54610.1">
    <property type="protein sequence ID" value="AT5G54610.1"/>
    <property type="gene ID" value="AT5G54610"/>
</dbReference>
<dbReference type="GeneID" id="835550"/>
<dbReference type="Gramene" id="AT5G54610.1">
    <property type="protein sequence ID" value="AT5G54610.1"/>
    <property type="gene ID" value="AT5G54610"/>
</dbReference>
<dbReference type="KEGG" id="ath:AT5G54610"/>
<dbReference type="Araport" id="AT5G54610"/>
<dbReference type="TAIR" id="AT5G54610">
    <property type="gene designation" value="ANK"/>
</dbReference>
<dbReference type="eggNOG" id="KOG0504">
    <property type="taxonomic scope" value="Eukaryota"/>
</dbReference>
<dbReference type="HOGENOM" id="CLU_000134_47_1_1"/>
<dbReference type="InParanoid" id="Q8GYH5"/>
<dbReference type="OMA" id="HITIMND"/>
<dbReference type="OrthoDB" id="674805at2759"/>
<dbReference type="PhylomeDB" id="Q8GYH5"/>
<dbReference type="PRO" id="PR:Q8GYH5"/>
<dbReference type="Proteomes" id="UP000006548">
    <property type="component" value="Chromosome 5"/>
</dbReference>
<dbReference type="ExpressionAtlas" id="Q8GYH5">
    <property type="expression patterns" value="baseline and differential"/>
</dbReference>
<dbReference type="GO" id="GO:0005886">
    <property type="term" value="C:plasma membrane"/>
    <property type="evidence" value="ECO:0007669"/>
    <property type="project" value="UniProtKB-SubCell"/>
</dbReference>
<dbReference type="GO" id="GO:0045087">
    <property type="term" value="P:innate immune response"/>
    <property type="evidence" value="ECO:0000315"/>
    <property type="project" value="TAIR"/>
</dbReference>
<dbReference type="GO" id="GO:0009751">
    <property type="term" value="P:response to salicylic acid"/>
    <property type="evidence" value="ECO:0000270"/>
    <property type="project" value="TAIR"/>
</dbReference>
<dbReference type="Gene3D" id="1.25.40.20">
    <property type="entry name" value="Ankyrin repeat-containing domain"/>
    <property type="match status" value="1"/>
</dbReference>
<dbReference type="InterPro" id="IPR002110">
    <property type="entry name" value="Ankyrin_rpt"/>
</dbReference>
<dbReference type="InterPro" id="IPR036770">
    <property type="entry name" value="Ankyrin_rpt-contain_sf"/>
</dbReference>
<dbReference type="PANTHER" id="PTHR24128:SF39">
    <property type="entry name" value="ANKYRIN REPEAT FAMILY PROTEIN-RELATED"/>
    <property type="match status" value="1"/>
</dbReference>
<dbReference type="PANTHER" id="PTHR24128">
    <property type="entry name" value="HOMEOBOX PROTEIN WARIAI"/>
    <property type="match status" value="1"/>
</dbReference>
<dbReference type="Pfam" id="PF00023">
    <property type="entry name" value="Ank"/>
    <property type="match status" value="1"/>
</dbReference>
<dbReference type="Pfam" id="PF12796">
    <property type="entry name" value="Ank_2"/>
    <property type="match status" value="1"/>
</dbReference>
<dbReference type="SMART" id="SM00248">
    <property type="entry name" value="ANK"/>
    <property type="match status" value="5"/>
</dbReference>
<dbReference type="SUPFAM" id="SSF48403">
    <property type="entry name" value="Ankyrin repeat"/>
    <property type="match status" value="1"/>
</dbReference>
<dbReference type="PROSITE" id="PS50297">
    <property type="entry name" value="ANK_REP_REGION"/>
    <property type="match status" value="1"/>
</dbReference>
<dbReference type="PROSITE" id="PS50088">
    <property type="entry name" value="ANK_REPEAT"/>
    <property type="match status" value="1"/>
</dbReference>
<comment type="function">
    <text evidence="2">Involved in plant defense. Required for basal resistance against Pseudomonas syringae pv. tomato DC3000. Required for resistance against nonpathogenic bacteria. May be involved in signaling components that function downstream of SNC2 and upstream of NPR1 and WRKY70 to regulate defense responses.</text>
</comment>
<comment type="subcellular location">
    <subcellularLocation>
        <location evidence="4">Cell membrane</location>
        <topology evidence="1">Multi-pass membrane protein</topology>
    </subcellularLocation>
</comment>
<comment type="sequence caution" evidence="4">
    <conflict type="erroneous gene model prediction">
        <sequence resource="EMBL-CDS" id="BAB09340"/>
    </conflict>
</comment>
<reference key="1">
    <citation type="journal article" date="1998" name="DNA Res.">
        <title>Structural analysis of Arabidopsis thaliana chromosome 5. VII. Sequence features of the regions of 1,013,767 bp covered by sixteen physically assigned P1 and TAC clones.</title>
        <authorList>
            <person name="Nakamura Y."/>
            <person name="Sato S."/>
            <person name="Asamizu E."/>
            <person name="Kaneko T."/>
            <person name="Kotani H."/>
            <person name="Miyajima N."/>
            <person name="Tabata S."/>
        </authorList>
    </citation>
    <scope>NUCLEOTIDE SEQUENCE [LARGE SCALE GENOMIC DNA]</scope>
    <source>
        <strain>cv. Columbia</strain>
    </source>
</reference>
<reference key="2">
    <citation type="journal article" date="2017" name="Plant J.">
        <title>Araport11: a complete reannotation of the Arabidopsis thaliana reference genome.</title>
        <authorList>
            <person name="Cheng C.Y."/>
            <person name="Krishnakumar V."/>
            <person name="Chan A.P."/>
            <person name="Thibaud-Nissen F."/>
            <person name="Schobel S."/>
            <person name="Town C.D."/>
        </authorList>
    </citation>
    <scope>GENOME REANNOTATION</scope>
    <source>
        <strain>cv. Columbia</strain>
    </source>
</reference>
<reference key="3">
    <citation type="journal article" date="2002" name="Science">
        <title>Functional annotation of a full-length Arabidopsis cDNA collection.</title>
        <authorList>
            <person name="Seki M."/>
            <person name="Narusaka M."/>
            <person name="Kamiya A."/>
            <person name="Ishida J."/>
            <person name="Satou M."/>
            <person name="Sakurai T."/>
            <person name="Nakajima M."/>
            <person name="Enju A."/>
            <person name="Akiyama K."/>
            <person name="Oono Y."/>
            <person name="Muramatsu M."/>
            <person name="Hayashizaki Y."/>
            <person name="Kawai J."/>
            <person name="Carninci P."/>
            <person name="Itoh M."/>
            <person name="Ishii Y."/>
            <person name="Arakawa T."/>
            <person name="Shibata K."/>
            <person name="Shinagawa A."/>
            <person name="Shinozaki K."/>
        </authorList>
    </citation>
    <scope>NUCLEOTIDE SEQUENCE [LARGE SCALE MRNA]</scope>
    <source>
        <strain>cv. Columbia</strain>
    </source>
</reference>
<reference key="4">
    <citation type="journal article" date="2012" name="Plant Physiol.">
        <title>The ankyrin-repeat transmembrane protein BDA1 functions downstream of the receptor-like protein SNC2 to regulate plant immunity.</title>
        <authorList>
            <person name="Yang Y."/>
            <person name="Zhang Y."/>
            <person name="Ding P."/>
            <person name="Johnson K."/>
            <person name="Li X."/>
            <person name="Zhang Y."/>
        </authorList>
    </citation>
    <scope>FUNCTION</scope>
    <scope>MUTAGENESIS OF PRO-74 AND GLY-330</scope>
</reference>